<proteinExistence type="inferred from homology"/>
<protein>
    <recommendedName>
        <fullName evidence="1">Urease accessory protein UreE</fullName>
    </recommendedName>
</protein>
<reference key="1">
    <citation type="journal article" date="2004" name="Proc. Natl. Acad. Sci. U.S.A.">
        <title>Genomic plasticity of the causative agent of melioidosis, Burkholderia pseudomallei.</title>
        <authorList>
            <person name="Holden M.T.G."/>
            <person name="Titball R.W."/>
            <person name="Peacock S.J."/>
            <person name="Cerdeno-Tarraga A.-M."/>
            <person name="Atkins T."/>
            <person name="Crossman L.C."/>
            <person name="Pitt T."/>
            <person name="Churcher C."/>
            <person name="Mungall K.L."/>
            <person name="Bentley S.D."/>
            <person name="Sebaihia M."/>
            <person name="Thomson N.R."/>
            <person name="Bason N."/>
            <person name="Beacham I.R."/>
            <person name="Brooks K."/>
            <person name="Brown K.A."/>
            <person name="Brown N.F."/>
            <person name="Challis G.L."/>
            <person name="Cherevach I."/>
            <person name="Chillingworth T."/>
            <person name="Cronin A."/>
            <person name="Crossett B."/>
            <person name="Davis P."/>
            <person name="DeShazer D."/>
            <person name="Feltwell T."/>
            <person name="Fraser A."/>
            <person name="Hance Z."/>
            <person name="Hauser H."/>
            <person name="Holroyd S."/>
            <person name="Jagels K."/>
            <person name="Keith K.E."/>
            <person name="Maddison M."/>
            <person name="Moule S."/>
            <person name="Price C."/>
            <person name="Quail M.A."/>
            <person name="Rabbinowitsch E."/>
            <person name="Rutherford K."/>
            <person name="Sanders M."/>
            <person name="Simmonds M."/>
            <person name="Songsivilai S."/>
            <person name="Stevens K."/>
            <person name="Tumapa S."/>
            <person name="Vesaratchavest M."/>
            <person name="Whitehead S."/>
            <person name="Yeats C."/>
            <person name="Barrell B.G."/>
            <person name="Oyston P.C.F."/>
            <person name="Parkhill J."/>
        </authorList>
    </citation>
    <scope>NUCLEOTIDE SEQUENCE [LARGE SCALE GENOMIC DNA]</scope>
    <source>
        <strain>K96243</strain>
    </source>
</reference>
<name>UREE_BURPS</name>
<accession>Q63RL2</accession>
<dbReference type="EMBL" id="BX571965">
    <property type="protein sequence ID" value="CAH36668.1"/>
    <property type="molecule type" value="Genomic_DNA"/>
</dbReference>
<dbReference type="RefSeq" id="WP_011205202.1">
    <property type="nucleotide sequence ID" value="NC_006350.1"/>
</dbReference>
<dbReference type="RefSeq" id="YP_109256.1">
    <property type="nucleotide sequence ID" value="NC_006350.1"/>
</dbReference>
<dbReference type="SMR" id="Q63RL2"/>
<dbReference type="STRING" id="272560.BPSL2660"/>
<dbReference type="KEGG" id="bps:BPSL2660"/>
<dbReference type="PATRIC" id="fig|272560.51.peg.2684"/>
<dbReference type="eggNOG" id="COG2371">
    <property type="taxonomic scope" value="Bacteria"/>
</dbReference>
<dbReference type="Proteomes" id="UP000000605">
    <property type="component" value="Chromosome 1"/>
</dbReference>
<dbReference type="GO" id="GO:0005737">
    <property type="term" value="C:cytoplasm"/>
    <property type="evidence" value="ECO:0007669"/>
    <property type="project" value="UniProtKB-SubCell"/>
</dbReference>
<dbReference type="GO" id="GO:0016151">
    <property type="term" value="F:nickel cation binding"/>
    <property type="evidence" value="ECO:0007669"/>
    <property type="project" value="UniProtKB-UniRule"/>
</dbReference>
<dbReference type="GO" id="GO:0051082">
    <property type="term" value="F:unfolded protein binding"/>
    <property type="evidence" value="ECO:0007669"/>
    <property type="project" value="UniProtKB-UniRule"/>
</dbReference>
<dbReference type="GO" id="GO:0006457">
    <property type="term" value="P:protein folding"/>
    <property type="evidence" value="ECO:0007669"/>
    <property type="project" value="InterPro"/>
</dbReference>
<dbReference type="GO" id="GO:0065003">
    <property type="term" value="P:protein-containing complex assembly"/>
    <property type="evidence" value="ECO:0007669"/>
    <property type="project" value="InterPro"/>
</dbReference>
<dbReference type="GO" id="GO:0019627">
    <property type="term" value="P:urea metabolic process"/>
    <property type="evidence" value="ECO:0007669"/>
    <property type="project" value="InterPro"/>
</dbReference>
<dbReference type="CDD" id="cd00571">
    <property type="entry name" value="UreE"/>
    <property type="match status" value="1"/>
</dbReference>
<dbReference type="Gene3D" id="2.60.260.20">
    <property type="entry name" value="Urease metallochaperone UreE, N-terminal domain"/>
    <property type="match status" value="1"/>
</dbReference>
<dbReference type="Gene3D" id="3.30.70.790">
    <property type="entry name" value="UreE, C-terminal domain"/>
    <property type="match status" value="1"/>
</dbReference>
<dbReference type="HAMAP" id="MF_00822">
    <property type="entry name" value="UreE"/>
    <property type="match status" value="1"/>
</dbReference>
<dbReference type="InterPro" id="IPR012406">
    <property type="entry name" value="UreE"/>
</dbReference>
<dbReference type="InterPro" id="IPR007864">
    <property type="entry name" value="UreE_C_dom"/>
</dbReference>
<dbReference type="InterPro" id="IPR004029">
    <property type="entry name" value="UreE_N"/>
</dbReference>
<dbReference type="InterPro" id="IPR036118">
    <property type="entry name" value="UreE_N_sf"/>
</dbReference>
<dbReference type="NCBIfam" id="NF009751">
    <property type="entry name" value="PRK13261.1-1"/>
    <property type="match status" value="1"/>
</dbReference>
<dbReference type="NCBIfam" id="NF009762">
    <property type="entry name" value="PRK13263.1"/>
    <property type="match status" value="1"/>
</dbReference>
<dbReference type="Pfam" id="PF05194">
    <property type="entry name" value="UreE_C"/>
    <property type="match status" value="1"/>
</dbReference>
<dbReference type="Pfam" id="PF02814">
    <property type="entry name" value="UreE_N"/>
    <property type="match status" value="1"/>
</dbReference>
<dbReference type="SMART" id="SM00988">
    <property type="entry name" value="UreE_N"/>
    <property type="match status" value="1"/>
</dbReference>
<dbReference type="SUPFAM" id="SSF69737">
    <property type="entry name" value="Urease metallochaperone UreE, C-terminal domain"/>
    <property type="match status" value="1"/>
</dbReference>
<dbReference type="SUPFAM" id="SSF69287">
    <property type="entry name" value="Urease metallochaperone UreE, N-terminal domain"/>
    <property type="match status" value="1"/>
</dbReference>
<sequence length="205" mass="22133">MRTIDKRIAPNVRLAATLVARAPALTLAYDARCKSRLAATLDTGEDVALVLPRGTVLRDGDVLVADDGALVRVAAAHEAVLLVRAPDALTLTRAAYHLGNRHTPVEVGAGCLKLEYDPVLADMLTRLGATVERASAPFQPEAGAYGGGHRHGHDATFAEDYALAQQVFDEHHGHSHSHDHDHDHDHDHDHQHGPCCSHGHHHGHR</sequence>
<evidence type="ECO:0000255" key="1">
    <source>
        <dbReference type="HAMAP-Rule" id="MF_00822"/>
    </source>
</evidence>
<evidence type="ECO:0000256" key="2">
    <source>
        <dbReference type="SAM" id="MobiDB-lite"/>
    </source>
</evidence>
<organism>
    <name type="scientific">Burkholderia pseudomallei (strain K96243)</name>
    <dbReference type="NCBI Taxonomy" id="272560"/>
    <lineage>
        <taxon>Bacteria</taxon>
        <taxon>Pseudomonadati</taxon>
        <taxon>Pseudomonadota</taxon>
        <taxon>Betaproteobacteria</taxon>
        <taxon>Burkholderiales</taxon>
        <taxon>Burkholderiaceae</taxon>
        <taxon>Burkholderia</taxon>
        <taxon>pseudomallei group</taxon>
    </lineage>
</organism>
<keyword id="KW-0143">Chaperone</keyword>
<keyword id="KW-0963">Cytoplasm</keyword>
<keyword id="KW-0533">Nickel</keyword>
<keyword id="KW-0996">Nickel insertion</keyword>
<keyword id="KW-1185">Reference proteome</keyword>
<feature type="chain" id="PRO_0000223409" description="Urease accessory protein UreE">
    <location>
        <begin position="1"/>
        <end position="205"/>
    </location>
</feature>
<feature type="region of interest" description="Disordered" evidence="2">
    <location>
        <begin position="171"/>
        <end position="205"/>
    </location>
</feature>
<feature type="compositionally biased region" description="Basic and acidic residues" evidence="2">
    <location>
        <begin position="171"/>
        <end position="192"/>
    </location>
</feature>
<gene>
    <name evidence="1" type="primary">ureE</name>
    <name type="ordered locus">BPSL2660</name>
</gene>
<comment type="function">
    <text evidence="1">Involved in urease metallocenter assembly. Binds nickel. Probably functions as a nickel donor during metallocenter assembly.</text>
</comment>
<comment type="subcellular location">
    <subcellularLocation>
        <location evidence="1">Cytoplasm</location>
    </subcellularLocation>
</comment>
<comment type="similarity">
    <text evidence="1">Belongs to the UreE family.</text>
</comment>